<dbReference type="EC" id="4.1.1.48" evidence="1"/>
<dbReference type="EMBL" id="CP000538">
    <property type="protein sequence ID" value="EAQ73195.1"/>
    <property type="molecule type" value="Genomic_DNA"/>
</dbReference>
<dbReference type="RefSeq" id="WP_002868783.1">
    <property type="nucleotide sequence ID" value="NC_008787.1"/>
</dbReference>
<dbReference type="SMR" id="A1VYK3"/>
<dbReference type="KEGG" id="cjj:CJJ81176_0519"/>
<dbReference type="eggNOG" id="COG0134">
    <property type="taxonomic scope" value="Bacteria"/>
</dbReference>
<dbReference type="HOGENOM" id="CLU_034247_2_0_7"/>
<dbReference type="UniPathway" id="UPA00035">
    <property type="reaction ID" value="UER00043"/>
</dbReference>
<dbReference type="Proteomes" id="UP000000646">
    <property type="component" value="Chromosome"/>
</dbReference>
<dbReference type="GO" id="GO:0004425">
    <property type="term" value="F:indole-3-glycerol-phosphate synthase activity"/>
    <property type="evidence" value="ECO:0007669"/>
    <property type="project" value="UniProtKB-UniRule"/>
</dbReference>
<dbReference type="GO" id="GO:0004640">
    <property type="term" value="F:phosphoribosylanthranilate isomerase activity"/>
    <property type="evidence" value="ECO:0007669"/>
    <property type="project" value="TreeGrafter"/>
</dbReference>
<dbReference type="GO" id="GO:0000162">
    <property type="term" value="P:L-tryptophan biosynthetic process"/>
    <property type="evidence" value="ECO:0007669"/>
    <property type="project" value="UniProtKB-UniRule"/>
</dbReference>
<dbReference type="CDD" id="cd00331">
    <property type="entry name" value="IGPS"/>
    <property type="match status" value="1"/>
</dbReference>
<dbReference type="FunFam" id="3.20.20.70:FF:000024">
    <property type="entry name" value="Indole-3-glycerol phosphate synthase"/>
    <property type="match status" value="1"/>
</dbReference>
<dbReference type="Gene3D" id="3.20.20.70">
    <property type="entry name" value="Aldolase class I"/>
    <property type="match status" value="1"/>
</dbReference>
<dbReference type="HAMAP" id="MF_00134_A">
    <property type="entry name" value="IGPS_A"/>
    <property type="match status" value="1"/>
</dbReference>
<dbReference type="HAMAP" id="MF_00134_B">
    <property type="entry name" value="IGPS_B"/>
    <property type="match status" value="1"/>
</dbReference>
<dbReference type="InterPro" id="IPR013785">
    <property type="entry name" value="Aldolase_TIM"/>
</dbReference>
<dbReference type="InterPro" id="IPR045186">
    <property type="entry name" value="Indole-3-glycerol_P_synth"/>
</dbReference>
<dbReference type="InterPro" id="IPR013798">
    <property type="entry name" value="Indole-3-glycerol_P_synth_dom"/>
</dbReference>
<dbReference type="InterPro" id="IPR001468">
    <property type="entry name" value="Indole-3-GlycerolPSynthase_CS"/>
</dbReference>
<dbReference type="InterPro" id="IPR011060">
    <property type="entry name" value="RibuloseP-bd_barrel"/>
</dbReference>
<dbReference type="NCBIfam" id="NF001377">
    <property type="entry name" value="PRK00278.2-4"/>
    <property type="match status" value="1"/>
</dbReference>
<dbReference type="NCBIfam" id="NF001378">
    <property type="entry name" value="PRK00278.2-5"/>
    <property type="match status" value="1"/>
</dbReference>
<dbReference type="PANTHER" id="PTHR22854:SF2">
    <property type="entry name" value="INDOLE-3-GLYCEROL-PHOSPHATE SYNTHASE"/>
    <property type="match status" value="1"/>
</dbReference>
<dbReference type="PANTHER" id="PTHR22854">
    <property type="entry name" value="TRYPTOPHAN BIOSYNTHESIS PROTEIN"/>
    <property type="match status" value="1"/>
</dbReference>
<dbReference type="Pfam" id="PF00218">
    <property type="entry name" value="IGPS"/>
    <property type="match status" value="1"/>
</dbReference>
<dbReference type="SUPFAM" id="SSF51366">
    <property type="entry name" value="Ribulose-phoshate binding barrel"/>
    <property type="match status" value="1"/>
</dbReference>
<dbReference type="PROSITE" id="PS00614">
    <property type="entry name" value="IGPS"/>
    <property type="match status" value="1"/>
</dbReference>
<proteinExistence type="inferred from homology"/>
<gene>
    <name evidence="1" type="primary">trpC</name>
    <name type="ordered locus">CJJ81176_0519</name>
</gene>
<feature type="chain" id="PRO_1000018470" description="Indole-3-glycerol phosphate synthase">
    <location>
        <begin position="1"/>
        <end position="258"/>
    </location>
</feature>
<reference key="1">
    <citation type="submission" date="2006-12" db="EMBL/GenBank/DDBJ databases">
        <authorList>
            <person name="Fouts D.E."/>
            <person name="Nelson K.E."/>
            <person name="Sebastian Y."/>
        </authorList>
    </citation>
    <scope>NUCLEOTIDE SEQUENCE [LARGE SCALE GENOMIC DNA]</scope>
    <source>
        <strain>81-176</strain>
    </source>
</reference>
<comment type="catalytic activity">
    <reaction evidence="1">
        <text>1-(2-carboxyphenylamino)-1-deoxy-D-ribulose 5-phosphate + H(+) = (1S,2R)-1-C-(indol-3-yl)glycerol 3-phosphate + CO2 + H2O</text>
        <dbReference type="Rhea" id="RHEA:23476"/>
        <dbReference type="ChEBI" id="CHEBI:15377"/>
        <dbReference type="ChEBI" id="CHEBI:15378"/>
        <dbReference type="ChEBI" id="CHEBI:16526"/>
        <dbReference type="ChEBI" id="CHEBI:58613"/>
        <dbReference type="ChEBI" id="CHEBI:58866"/>
        <dbReference type="EC" id="4.1.1.48"/>
    </reaction>
</comment>
<comment type="pathway">
    <text evidence="1">Amino-acid biosynthesis; L-tryptophan biosynthesis; L-tryptophan from chorismate: step 4/5.</text>
</comment>
<comment type="similarity">
    <text evidence="1">Belongs to the TrpC family.</text>
</comment>
<accession>A1VYK3</accession>
<name>TRPC_CAMJJ</name>
<protein>
    <recommendedName>
        <fullName evidence="1">Indole-3-glycerol phosphate synthase</fullName>
        <shortName evidence="1">IGPS</shortName>
        <ecNumber evidence="1">4.1.1.48</ecNumber>
    </recommendedName>
</protein>
<sequence length="258" mass="29604">MILDKIFEKTKEDLKERKLKLPYDMLGRSLASNPFFPKDVIKALKRVEKEVKIIAEVKKASPSKGVIREDFDPLSIALNYEKNKATAISVLTEPHFFKGSLEYLSLIRRYTQIPLLRKDFIFDEYQILEALVYGADFVLLIAKMLSMKELKKLLEFARHLGLEALVEIHDKEDLSKAIFAGADIIGINHRNLEDFTMDMSLCEKLIPQIPNSKIIIAESGLENKEFLEHLQNLGVDAFLIGEYFMREEDEGKALKALL</sequence>
<evidence type="ECO:0000255" key="1">
    <source>
        <dbReference type="HAMAP-Rule" id="MF_00134"/>
    </source>
</evidence>
<keyword id="KW-0028">Amino-acid biosynthesis</keyword>
<keyword id="KW-0057">Aromatic amino acid biosynthesis</keyword>
<keyword id="KW-0210">Decarboxylase</keyword>
<keyword id="KW-0456">Lyase</keyword>
<keyword id="KW-0822">Tryptophan biosynthesis</keyword>
<organism>
    <name type="scientific">Campylobacter jejuni subsp. jejuni serotype O:23/36 (strain 81-176)</name>
    <dbReference type="NCBI Taxonomy" id="354242"/>
    <lineage>
        <taxon>Bacteria</taxon>
        <taxon>Pseudomonadati</taxon>
        <taxon>Campylobacterota</taxon>
        <taxon>Epsilonproteobacteria</taxon>
        <taxon>Campylobacterales</taxon>
        <taxon>Campylobacteraceae</taxon>
        <taxon>Campylobacter</taxon>
    </lineage>
</organism>